<accession>Q52282</accession>
<keyword id="KW-0614">Plasmid</keyword>
<geneLocation type="plasmid">
    <name>IncP-beta R751</name>
</geneLocation>
<gene>
    <name type="primary">kleG</name>
</gene>
<evidence type="ECO:0000256" key="1">
    <source>
        <dbReference type="SAM" id="MobiDB-lite"/>
    </source>
</evidence>
<dbReference type="EMBL" id="U67194">
    <property type="protein sequence ID" value="AAC64423.2"/>
    <property type="molecule type" value="Genomic_DNA"/>
</dbReference>
<name>KLEG1_ECOLX</name>
<sequence>MRHSSLTPRGKSWPCSAPPWPSSRTGWACLPRRCASRRRWRAGRPCSTTRTGPRFARARWIPTTGDRRGRRPQRHRPSTRREQIFSR</sequence>
<feature type="chain" id="PRO_0000068374" description="Putative protein KleG">
    <location>
        <begin position="1"/>
        <end position="87"/>
    </location>
</feature>
<feature type="region of interest" description="Disordered" evidence="1">
    <location>
        <begin position="1"/>
        <end position="23"/>
    </location>
</feature>
<feature type="region of interest" description="Disordered" evidence="1">
    <location>
        <begin position="61"/>
        <end position="87"/>
    </location>
</feature>
<feature type="compositionally biased region" description="Basic residues" evidence="1">
    <location>
        <begin position="68"/>
        <end position="78"/>
    </location>
</feature>
<organism>
    <name type="scientific">Escherichia coli</name>
    <dbReference type="NCBI Taxonomy" id="562"/>
    <lineage>
        <taxon>Bacteria</taxon>
        <taxon>Pseudomonadati</taxon>
        <taxon>Pseudomonadota</taxon>
        <taxon>Gammaproteobacteria</taxon>
        <taxon>Enterobacterales</taxon>
        <taxon>Enterobacteriaceae</taxon>
        <taxon>Escherichia</taxon>
    </lineage>
</organism>
<reference key="1">
    <citation type="journal article" date="1995" name="Microbiology">
        <title>Evolution of the korA-oriV segment of promiscuous IncP plasmids.</title>
        <authorList>
            <person name="Thomas C.M."/>
            <person name="Smith C.A."/>
            <person name="Ibbotson J.P."/>
            <person name="Johnston L."/>
            <person name="Wang N."/>
        </authorList>
    </citation>
    <scope>NUCLEOTIDE SEQUENCE [GENOMIC DNA]</scope>
</reference>
<reference key="2">
    <citation type="submission" date="2001-07" db="EMBL/GenBank/DDBJ databases">
        <authorList>
            <person name="Haines A.S."/>
            <person name="Thomas C.M."/>
        </authorList>
    </citation>
    <scope>SEQUENCE REVISION</scope>
</reference>
<proteinExistence type="predicted"/>
<protein>
    <recommendedName>
        <fullName>Putative protein KleG</fullName>
    </recommendedName>
</protein>